<comment type="function">
    <text evidence="1">Catalyzes the conversion of (8S)-3',8-cyclo-7,8-dihydroguanosine 5'-triphosphate to cyclic pyranopterin monophosphate (cPMP).</text>
</comment>
<comment type="catalytic activity">
    <reaction evidence="1">
        <text>(8S)-3',8-cyclo-7,8-dihydroguanosine 5'-triphosphate = cyclic pyranopterin phosphate + diphosphate</text>
        <dbReference type="Rhea" id="RHEA:49580"/>
        <dbReference type="ChEBI" id="CHEBI:33019"/>
        <dbReference type="ChEBI" id="CHEBI:59648"/>
        <dbReference type="ChEBI" id="CHEBI:131766"/>
        <dbReference type="EC" id="4.6.1.17"/>
    </reaction>
</comment>
<comment type="pathway">
    <text evidence="1">Cofactor biosynthesis; molybdopterin biosynthesis.</text>
</comment>
<comment type="subunit">
    <text evidence="1">Homohexamer; trimer of dimers.</text>
</comment>
<comment type="similarity">
    <text evidence="1">Belongs to the MoaC family.</text>
</comment>
<evidence type="ECO:0000255" key="1">
    <source>
        <dbReference type="HAMAP-Rule" id="MF_01224"/>
    </source>
</evidence>
<keyword id="KW-0456">Lyase</keyword>
<keyword id="KW-0501">Molybdenum cofactor biosynthesis</keyword>
<organism>
    <name type="scientific">Shewanella putrefaciens (strain CN-32 / ATCC BAA-453)</name>
    <dbReference type="NCBI Taxonomy" id="319224"/>
    <lineage>
        <taxon>Bacteria</taxon>
        <taxon>Pseudomonadati</taxon>
        <taxon>Pseudomonadota</taxon>
        <taxon>Gammaproteobacteria</taxon>
        <taxon>Alteromonadales</taxon>
        <taxon>Shewanellaceae</taxon>
        <taxon>Shewanella</taxon>
    </lineage>
</organism>
<proteinExistence type="inferred from homology"/>
<accession>A4Y2D9</accession>
<gene>
    <name evidence="1" type="primary">moaC</name>
    <name type="ordered locus">Sputcn32_0390</name>
</gene>
<dbReference type="EC" id="4.6.1.17" evidence="1"/>
<dbReference type="EMBL" id="CP000681">
    <property type="protein sequence ID" value="ABP74122.1"/>
    <property type="molecule type" value="Genomic_DNA"/>
</dbReference>
<dbReference type="SMR" id="A4Y2D9"/>
<dbReference type="STRING" id="319224.Sputcn32_0390"/>
<dbReference type="KEGG" id="spc:Sputcn32_0390"/>
<dbReference type="eggNOG" id="COG0315">
    <property type="taxonomic scope" value="Bacteria"/>
</dbReference>
<dbReference type="HOGENOM" id="CLU_074693_1_1_6"/>
<dbReference type="UniPathway" id="UPA00344"/>
<dbReference type="GO" id="GO:0061799">
    <property type="term" value="F:cyclic pyranopterin monophosphate synthase activity"/>
    <property type="evidence" value="ECO:0007669"/>
    <property type="project" value="UniProtKB-UniRule"/>
</dbReference>
<dbReference type="GO" id="GO:0061798">
    <property type="term" value="F:GTP 3',8'-cyclase activity"/>
    <property type="evidence" value="ECO:0007669"/>
    <property type="project" value="TreeGrafter"/>
</dbReference>
<dbReference type="GO" id="GO:0006777">
    <property type="term" value="P:Mo-molybdopterin cofactor biosynthetic process"/>
    <property type="evidence" value="ECO:0007669"/>
    <property type="project" value="UniProtKB-UniRule"/>
</dbReference>
<dbReference type="CDD" id="cd01420">
    <property type="entry name" value="MoaC_PE"/>
    <property type="match status" value="1"/>
</dbReference>
<dbReference type="FunFam" id="3.30.70.640:FF:000001">
    <property type="entry name" value="Cyclic pyranopterin monophosphate synthase"/>
    <property type="match status" value="1"/>
</dbReference>
<dbReference type="Gene3D" id="3.30.70.640">
    <property type="entry name" value="Molybdopterin cofactor biosynthesis C (MoaC) domain"/>
    <property type="match status" value="1"/>
</dbReference>
<dbReference type="HAMAP" id="MF_01224_B">
    <property type="entry name" value="MoaC_B"/>
    <property type="match status" value="1"/>
</dbReference>
<dbReference type="InterPro" id="IPR023045">
    <property type="entry name" value="MoaC"/>
</dbReference>
<dbReference type="InterPro" id="IPR047594">
    <property type="entry name" value="MoaC_bact/euk"/>
</dbReference>
<dbReference type="InterPro" id="IPR036522">
    <property type="entry name" value="MoaC_sf"/>
</dbReference>
<dbReference type="InterPro" id="IPR050105">
    <property type="entry name" value="MoCo_biosynth_MoaA/MoaC"/>
</dbReference>
<dbReference type="InterPro" id="IPR002820">
    <property type="entry name" value="Mopterin_CF_biosynth-C_dom"/>
</dbReference>
<dbReference type="NCBIfam" id="TIGR00581">
    <property type="entry name" value="moaC"/>
    <property type="match status" value="1"/>
</dbReference>
<dbReference type="NCBIfam" id="NF006870">
    <property type="entry name" value="PRK09364.1"/>
    <property type="match status" value="1"/>
</dbReference>
<dbReference type="PANTHER" id="PTHR22960:SF0">
    <property type="entry name" value="MOLYBDENUM COFACTOR BIOSYNTHESIS PROTEIN 1"/>
    <property type="match status" value="1"/>
</dbReference>
<dbReference type="PANTHER" id="PTHR22960">
    <property type="entry name" value="MOLYBDOPTERIN COFACTOR SYNTHESIS PROTEIN A"/>
    <property type="match status" value="1"/>
</dbReference>
<dbReference type="Pfam" id="PF01967">
    <property type="entry name" value="MoaC"/>
    <property type="match status" value="1"/>
</dbReference>
<dbReference type="SUPFAM" id="SSF55040">
    <property type="entry name" value="Molybdenum cofactor biosynthesis protein C, MoaC"/>
    <property type="match status" value="1"/>
</dbReference>
<name>MOAC_SHEPC</name>
<reference key="1">
    <citation type="submission" date="2007-04" db="EMBL/GenBank/DDBJ databases">
        <title>Complete sequence of Shewanella putrefaciens CN-32.</title>
        <authorList>
            <consortium name="US DOE Joint Genome Institute"/>
            <person name="Copeland A."/>
            <person name="Lucas S."/>
            <person name="Lapidus A."/>
            <person name="Barry K."/>
            <person name="Detter J.C."/>
            <person name="Glavina del Rio T."/>
            <person name="Hammon N."/>
            <person name="Israni S."/>
            <person name="Dalin E."/>
            <person name="Tice H."/>
            <person name="Pitluck S."/>
            <person name="Chain P."/>
            <person name="Malfatti S."/>
            <person name="Shin M."/>
            <person name="Vergez L."/>
            <person name="Schmutz J."/>
            <person name="Larimer F."/>
            <person name="Land M."/>
            <person name="Hauser L."/>
            <person name="Kyrpides N."/>
            <person name="Mikhailova N."/>
            <person name="Romine M.F."/>
            <person name="Fredrickson J."/>
            <person name="Tiedje J."/>
            <person name="Richardson P."/>
        </authorList>
    </citation>
    <scope>NUCLEOTIDE SEQUENCE [LARGE SCALE GENOMIC DNA]</scope>
    <source>
        <strain>CN-32 / ATCC BAA-453</strain>
    </source>
</reference>
<sequence length="158" mass="17179">MSNVFTHINADGNAHMVDVTEKAVTEREARAEAFIEMASTTLEMIMSGSHHKGDVFATARIAGIQAAKKTSDLIPLCHPLMLTKVEVDLEAQPEHNRVRITSLCKLSGKTGVEMEALTAASVAALTIYDMCKAVQKDMVISQVRLLEKRGGKSGHFKV</sequence>
<protein>
    <recommendedName>
        <fullName evidence="1">Cyclic pyranopterin monophosphate synthase</fullName>
        <ecNumber evidence="1">4.6.1.17</ecNumber>
    </recommendedName>
    <alternativeName>
        <fullName evidence="1">Molybdenum cofactor biosynthesis protein C</fullName>
    </alternativeName>
</protein>
<feature type="chain" id="PRO_1000054138" description="Cyclic pyranopterin monophosphate synthase">
    <location>
        <begin position="1"/>
        <end position="158"/>
    </location>
</feature>
<feature type="active site" evidence="1">
    <location>
        <position position="129"/>
    </location>
</feature>
<feature type="binding site" evidence="1">
    <location>
        <begin position="76"/>
        <end position="78"/>
    </location>
    <ligand>
        <name>substrate</name>
    </ligand>
</feature>
<feature type="binding site" evidence="1">
    <location>
        <begin position="114"/>
        <end position="115"/>
    </location>
    <ligand>
        <name>substrate</name>
    </ligand>
</feature>